<gene>
    <name evidence="5" type="primary">pdh2</name>
</gene>
<proteinExistence type="evidence at transcript level"/>
<reference key="1">
    <citation type="journal article" date="2008" name="Curr. Genet.">
        <title>Molecular cloning of three pyranose dehydrogenase-encoding genes from Agaricus meleagris and analysis of their expression by real-time RT-PCR.</title>
        <authorList>
            <person name="Kittl R."/>
            <person name="Sygmund C."/>
            <person name="Halada P."/>
            <person name="Volc J."/>
            <person name="Divne C."/>
            <person name="Haltrich D."/>
            <person name="Peterbauer C.K."/>
        </authorList>
    </citation>
    <scope>NUCLEOTIDE SEQUENCE [GENOMIC DNA / MRNA]</scope>
    <scope>INDUCTION</scope>
    <source>
        <strain>CCBAS 907</strain>
    </source>
</reference>
<sequence length="600" mass="65163">MLSRVAKLNSRLVSLALLGSQIAFGAITYQHPDDLPSGVDYDFIVAGGGTAGLVVASRLSENSKWNVLVIEAGPSNKDTPETRIPGLADNLPGTRTDWNYTTIPQDALGGRSLNYSRAKVLGGCSTHNGMVYTRGPRDDWNYWAEITDNQALKWDNVLPIMKNTEKFSQDFLDQSMEGHIDPSVHGFDGMLSVVASYTNVSFNNLLLETTRELSDEFPFKLDLNDGKPHGLAWTQYTIDQGAERSSSATSYLESTGDNVHVLVNTHVTRIVSAGNETDFRSVEFAVDANSPKKVLTAKKELILSAGVIASPQILMNSGIGGREELQAIGVDTLIDNPSVGRNLSDQASTLLMFDTTLPNTDYDVAAALTEWDNSRSGPMAYAARLNHLTWVRLPDDKLSGSDPSSGHDSPHIEFQFRQISHQLPPADVPNQVQLPDPDSIGVVLQFSVVNLYSISLGSVTLNNNDPFADPIIDLNMFGDQKDIAILREGVRSARRMFSSQAFKNVVHETVYPPAGVTSDEDLDAFLRTSAVSYLHGVGTLSMSPHSASWGVVNPDFRVKGTTGLRVVDASVIPRAPAGHTQIPVYTFAEHASALIADSYN</sequence>
<accession>Q3L243</accession>
<evidence type="ECO:0000250" key="1">
    <source>
        <dbReference type="UniProtKB" id="E4QP00"/>
    </source>
</evidence>
<evidence type="ECO:0000250" key="2">
    <source>
        <dbReference type="UniProtKB" id="Q3L245"/>
    </source>
</evidence>
<evidence type="ECO:0000255" key="3">
    <source>
        <dbReference type="PROSITE-ProRule" id="PRU00498"/>
    </source>
</evidence>
<evidence type="ECO:0000269" key="4">
    <source>
    </source>
</evidence>
<evidence type="ECO:0000303" key="5">
    <source>
    </source>
</evidence>
<evidence type="ECO:0000305" key="6"/>
<feature type="signal peptide" evidence="2">
    <location>
        <begin position="1"/>
        <end position="25"/>
    </location>
</feature>
<feature type="chain" id="PRO_0000431288" description="Pyranose dehydrogenase 2">
    <location>
        <begin position="26"/>
        <end position="600"/>
    </location>
</feature>
<feature type="active site" description="Proton acceptor" evidence="1">
    <location>
        <position position="535"/>
    </location>
</feature>
<feature type="active site" evidence="2">
    <location>
        <position position="579"/>
    </location>
</feature>
<feature type="modified residue" description="Tele-8alpha-FAD histidine" evidence="2">
    <location>
        <position position="127"/>
    </location>
</feature>
<feature type="glycosylation site" description="N-linked (GlcNAc...) asparagine" evidence="3">
    <location>
        <position position="99"/>
    </location>
</feature>
<feature type="glycosylation site" description="N-linked (GlcNAc...) asparagine" evidence="3">
    <location>
        <position position="114"/>
    </location>
</feature>
<feature type="glycosylation site" description="N-linked (GlcNAc...) asparagine" evidence="3">
    <location>
        <position position="199"/>
    </location>
</feature>
<feature type="glycosylation site" description="N-linked (GlcNAc...) asparagine" evidence="3">
    <location>
        <position position="275"/>
    </location>
</feature>
<feature type="glycosylation site" description="N-linked (GlcNAc...) asparagine" evidence="3">
    <location>
        <position position="342"/>
    </location>
</feature>
<keyword id="KW-0119">Carbohydrate metabolism</keyword>
<keyword id="KW-0274">FAD</keyword>
<keyword id="KW-0285">Flavoprotein</keyword>
<keyword id="KW-0325">Glycoprotein</keyword>
<keyword id="KW-0560">Oxidoreductase</keyword>
<keyword id="KW-0964">Secreted</keyword>
<keyword id="KW-0732">Signal</keyword>
<protein>
    <recommendedName>
        <fullName evidence="5">Pyranose dehydrogenase 2</fullName>
        <shortName evidence="5">PDH 2</shortName>
        <ecNumber evidence="2">1.1.99.29</ecNumber>
    </recommendedName>
    <alternativeName>
        <fullName evidence="2">Pyranose:quinone oxidoreductase 2</fullName>
    </alternativeName>
</protein>
<dbReference type="EC" id="1.1.99.29" evidence="2"/>
<dbReference type="EMBL" id="AY753308">
    <property type="protein sequence ID" value="AAW82998.1"/>
    <property type="molecule type" value="Genomic_DNA"/>
</dbReference>
<dbReference type="EMBL" id="AY753309">
    <property type="protein sequence ID" value="AAW82999.1"/>
    <property type="molecule type" value="mRNA"/>
</dbReference>
<dbReference type="SMR" id="Q3L243"/>
<dbReference type="GlyCosmos" id="Q3L243">
    <property type="glycosylation" value="5 sites, No reported glycans"/>
</dbReference>
<dbReference type="BRENDA" id="1.1.99.29">
    <property type="organism ID" value="7355"/>
</dbReference>
<dbReference type="GO" id="GO:0005576">
    <property type="term" value="C:extracellular region"/>
    <property type="evidence" value="ECO:0007669"/>
    <property type="project" value="UniProtKB-SubCell"/>
</dbReference>
<dbReference type="GO" id="GO:0050660">
    <property type="term" value="F:flavin adenine dinucleotide binding"/>
    <property type="evidence" value="ECO:0007669"/>
    <property type="project" value="InterPro"/>
</dbReference>
<dbReference type="GO" id="GO:0033718">
    <property type="term" value="F:pyranose dehydrogenase (acceptor) activity"/>
    <property type="evidence" value="ECO:0007669"/>
    <property type="project" value="UniProtKB-EC"/>
</dbReference>
<dbReference type="Gene3D" id="3.50.50.60">
    <property type="entry name" value="FAD/NAD(P)-binding domain"/>
    <property type="match status" value="1"/>
</dbReference>
<dbReference type="Gene3D" id="3.30.560.10">
    <property type="entry name" value="Glucose Oxidase, domain 3"/>
    <property type="match status" value="1"/>
</dbReference>
<dbReference type="InterPro" id="IPR036188">
    <property type="entry name" value="FAD/NAD-bd_sf"/>
</dbReference>
<dbReference type="InterPro" id="IPR012132">
    <property type="entry name" value="GMC_OxRdtase"/>
</dbReference>
<dbReference type="InterPro" id="IPR000172">
    <property type="entry name" value="GMC_OxRdtase_N"/>
</dbReference>
<dbReference type="InterPro" id="IPR007867">
    <property type="entry name" value="GMC_OxRtase_C"/>
</dbReference>
<dbReference type="PANTHER" id="PTHR11552">
    <property type="entry name" value="GLUCOSE-METHANOL-CHOLINE GMC OXIDOREDUCTASE"/>
    <property type="match status" value="1"/>
</dbReference>
<dbReference type="PANTHER" id="PTHR11552:SF201">
    <property type="entry name" value="GLUCOSE-METHANOL-CHOLINE OXIDOREDUCTASE N-TERMINAL DOMAIN-CONTAINING PROTEIN"/>
    <property type="match status" value="1"/>
</dbReference>
<dbReference type="Pfam" id="PF05199">
    <property type="entry name" value="GMC_oxred_C"/>
    <property type="match status" value="1"/>
</dbReference>
<dbReference type="Pfam" id="PF00732">
    <property type="entry name" value="GMC_oxred_N"/>
    <property type="match status" value="1"/>
</dbReference>
<dbReference type="PIRSF" id="PIRSF000137">
    <property type="entry name" value="Alcohol_oxidase"/>
    <property type="match status" value="1"/>
</dbReference>
<dbReference type="SUPFAM" id="SSF54373">
    <property type="entry name" value="FAD-linked reductases, C-terminal domain"/>
    <property type="match status" value="1"/>
</dbReference>
<dbReference type="SUPFAM" id="SSF51905">
    <property type="entry name" value="FAD/NAD(P)-binding domain"/>
    <property type="match status" value="1"/>
</dbReference>
<comment type="function">
    <text evidence="2">Catalyzes the single-oxidation or sequential double oxidation reaction of carbohydrates primarily at carbon-2 and/or carbon-3 with the concomitant reduction of the flavin. The enzyme exhibits a broad sugar substrate specificity, oxidizing different aldopyranoses to the corresponding C-1, C-2, C-3 or C-1,2, C-2,3 and C-3,4 (di)dehydro sugars with substrate-specific regioselectivity. Accepts only a narrow range of electron acceptors such as substituted benzoquinones and complexed metal ions and reacts extremely slowly with O(2) as acceptor. May play a role in the natural recycling of plant matter by oxidizing all major monosaccharides in lignocellulose and by reducing quinone compounds or reactive radical species generated during lignin depolymerization (By similarity).</text>
</comment>
<comment type="catalytic activity">
    <reaction evidence="2">
        <text>pyranose + acceptor = pyranos-2-ulose + reduced acceptor.</text>
        <dbReference type="EC" id="1.1.99.29"/>
    </reaction>
</comment>
<comment type="catalytic activity">
    <reaction evidence="2">
        <text>pyranose + acceptor = pyranos-3-ulose + reduced acceptor.</text>
        <dbReference type="EC" id="1.1.99.29"/>
    </reaction>
</comment>
<comment type="catalytic activity">
    <reaction evidence="2">
        <text>pyranose + acceptor = pyranos-2,3-diulose + reduced acceptor.</text>
        <dbReference type="EC" id="1.1.99.29"/>
    </reaction>
</comment>
<comment type="catalytic activity">
    <reaction evidence="2">
        <text>a pyranoside + acceptor = a pyranosid-3-ulose + reduced acceptor.</text>
        <dbReference type="EC" id="1.1.99.29"/>
    </reaction>
</comment>
<comment type="catalytic activity">
    <reaction evidence="2">
        <text>a pyranoside + acceptor = a pyranosid-3,4-diulose + reduced acceptor.</text>
        <dbReference type="EC" id="1.1.99.29"/>
    </reaction>
</comment>
<comment type="cofactor">
    <cofactor evidence="2">
        <name>FAD</name>
        <dbReference type="ChEBI" id="CHEBI:57692"/>
    </cofactor>
    <text evidence="2">Binds 1 FAD covalently per subunit.</text>
</comment>
<comment type="subunit">
    <text evidence="2">Monomer.</text>
</comment>
<comment type="subcellular location">
    <subcellularLocation>
        <location evidence="2">Secreted</location>
    </subcellularLocation>
</comment>
<comment type="induction">
    <text evidence="4">Constitutively expressed, but on a much lower level than phd1 (only 0.2% of the amount of transcript).</text>
</comment>
<comment type="PTM">
    <text evidence="2">N-glycosylated.</text>
</comment>
<comment type="similarity">
    <text evidence="6">Belongs to the GMC oxidoreductase family.</text>
</comment>
<name>PDH2_LEUMG</name>
<organism>
    <name type="scientific">Leucoagaricus meleagris</name>
    <name type="common">Western flat-topped agaric</name>
    <name type="synonym">Agaricus meleagris</name>
    <dbReference type="NCBI Taxonomy" id="201219"/>
    <lineage>
        <taxon>Eukaryota</taxon>
        <taxon>Fungi</taxon>
        <taxon>Dikarya</taxon>
        <taxon>Basidiomycota</taxon>
        <taxon>Agaricomycotina</taxon>
        <taxon>Agaricomycetes</taxon>
        <taxon>Agaricomycetidae</taxon>
        <taxon>Agaricales</taxon>
        <taxon>Agaricineae</taxon>
        <taxon>Agaricaceae</taxon>
        <taxon>Leucoagaricus</taxon>
    </lineage>
</organism>